<organism>
    <name type="scientific">Lawsonia intracellularis (strain PHE/MN1-00)</name>
    <dbReference type="NCBI Taxonomy" id="363253"/>
    <lineage>
        <taxon>Bacteria</taxon>
        <taxon>Pseudomonadati</taxon>
        <taxon>Thermodesulfobacteriota</taxon>
        <taxon>Desulfovibrionia</taxon>
        <taxon>Desulfovibrionales</taxon>
        <taxon>Desulfovibrionaceae</taxon>
        <taxon>Lawsonia</taxon>
    </lineage>
</organism>
<sequence length="206" mass="22864">MAIVTVYNQQKEETGKINLSSKIFEVQVQPEILHLVVRAQLAAKRAGTHSVKTRGHVSGGGAKPWRQKGTGRARAGSNRSPLWRGGGIVFGPQPRDYSFKVNKKIRSLALCMALSSRFAEENLIVIDNIVLPEIKTKHFVGVANILGLHKALIVAPVESTQLLLSMRNVPNVKLLTYDRLNVYDILKYKQLVLLEGAVQHIEARLK</sequence>
<feature type="chain" id="PRO_1000052428" description="Large ribosomal subunit protein uL4">
    <location>
        <begin position="1"/>
        <end position="206"/>
    </location>
</feature>
<feature type="region of interest" description="Disordered" evidence="2">
    <location>
        <begin position="48"/>
        <end position="78"/>
    </location>
</feature>
<accession>Q1MPR2</accession>
<name>RL4_LAWIP</name>
<evidence type="ECO:0000255" key="1">
    <source>
        <dbReference type="HAMAP-Rule" id="MF_01328"/>
    </source>
</evidence>
<evidence type="ECO:0000256" key="2">
    <source>
        <dbReference type="SAM" id="MobiDB-lite"/>
    </source>
</evidence>
<evidence type="ECO:0000305" key="3"/>
<reference key="1">
    <citation type="submission" date="2005-11" db="EMBL/GenBank/DDBJ databases">
        <title>The complete genome sequence of Lawsonia intracellularis: the causative agent of proliferative enteropathy.</title>
        <authorList>
            <person name="Kaur K."/>
            <person name="Zhang Q."/>
            <person name="Beckler D."/>
            <person name="Munir S."/>
            <person name="Li L."/>
            <person name="Kinsley K."/>
            <person name="Herron L."/>
            <person name="Peterson A."/>
            <person name="May B."/>
            <person name="Singh S."/>
            <person name="Gebhart C."/>
            <person name="Kapur V."/>
        </authorList>
    </citation>
    <scope>NUCLEOTIDE SEQUENCE [LARGE SCALE GENOMIC DNA]</scope>
    <source>
        <strain>PHE/MN1-00</strain>
    </source>
</reference>
<gene>
    <name evidence="1" type="primary">rplD</name>
    <name type="ordered locus">LI0961</name>
</gene>
<dbReference type="EMBL" id="AM180252">
    <property type="protein sequence ID" value="CAJ55015.1"/>
    <property type="molecule type" value="Genomic_DNA"/>
</dbReference>
<dbReference type="RefSeq" id="WP_011527044.1">
    <property type="nucleotide sequence ID" value="NC_008011.1"/>
</dbReference>
<dbReference type="SMR" id="Q1MPR2"/>
<dbReference type="STRING" id="363253.LI0961"/>
<dbReference type="KEGG" id="lip:LI0961"/>
<dbReference type="eggNOG" id="COG0088">
    <property type="taxonomic scope" value="Bacteria"/>
</dbReference>
<dbReference type="HOGENOM" id="CLU_041575_5_2_7"/>
<dbReference type="OrthoDB" id="9803201at2"/>
<dbReference type="Proteomes" id="UP000002430">
    <property type="component" value="Chromosome"/>
</dbReference>
<dbReference type="GO" id="GO:1990904">
    <property type="term" value="C:ribonucleoprotein complex"/>
    <property type="evidence" value="ECO:0007669"/>
    <property type="project" value="UniProtKB-KW"/>
</dbReference>
<dbReference type="GO" id="GO:0005840">
    <property type="term" value="C:ribosome"/>
    <property type="evidence" value="ECO:0007669"/>
    <property type="project" value="UniProtKB-KW"/>
</dbReference>
<dbReference type="GO" id="GO:0019843">
    <property type="term" value="F:rRNA binding"/>
    <property type="evidence" value="ECO:0007669"/>
    <property type="project" value="UniProtKB-UniRule"/>
</dbReference>
<dbReference type="GO" id="GO:0003735">
    <property type="term" value="F:structural constituent of ribosome"/>
    <property type="evidence" value="ECO:0007669"/>
    <property type="project" value="InterPro"/>
</dbReference>
<dbReference type="GO" id="GO:0006412">
    <property type="term" value="P:translation"/>
    <property type="evidence" value="ECO:0007669"/>
    <property type="project" value="UniProtKB-UniRule"/>
</dbReference>
<dbReference type="Gene3D" id="3.40.1370.10">
    <property type="match status" value="1"/>
</dbReference>
<dbReference type="HAMAP" id="MF_01328_B">
    <property type="entry name" value="Ribosomal_uL4_B"/>
    <property type="match status" value="1"/>
</dbReference>
<dbReference type="InterPro" id="IPR002136">
    <property type="entry name" value="Ribosomal_uL4"/>
</dbReference>
<dbReference type="InterPro" id="IPR013005">
    <property type="entry name" value="Ribosomal_uL4-like"/>
</dbReference>
<dbReference type="InterPro" id="IPR023574">
    <property type="entry name" value="Ribosomal_uL4_dom_sf"/>
</dbReference>
<dbReference type="NCBIfam" id="TIGR03953">
    <property type="entry name" value="rplD_bact"/>
    <property type="match status" value="1"/>
</dbReference>
<dbReference type="PANTHER" id="PTHR10746">
    <property type="entry name" value="50S RIBOSOMAL PROTEIN L4"/>
    <property type="match status" value="1"/>
</dbReference>
<dbReference type="PANTHER" id="PTHR10746:SF6">
    <property type="entry name" value="LARGE RIBOSOMAL SUBUNIT PROTEIN UL4M"/>
    <property type="match status" value="1"/>
</dbReference>
<dbReference type="Pfam" id="PF00573">
    <property type="entry name" value="Ribosomal_L4"/>
    <property type="match status" value="1"/>
</dbReference>
<dbReference type="SUPFAM" id="SSF52166">
    <property type="entry name" value="Ribosomal protein L4"/>
    <property type="match status" value="1"/>
</dbReference>
<protein>
    <recommendedName>
        <fullName evidence="1">Large ribosomal subunit protein uL4</fullName>
    </recommendedName>
    <alternativeName>
        <fullName evidence="3">50S ribosomal protein L4</fullName>
    </alternativeName>
</protein>
<proteinExistence type="inferred from homology"/>
<keyword id="KW-1185">Reference proteome</keyword>
<keyword id="KW-0687">Ribonucleoprotein</keyword>
<keyword id="KW-0689">Ribosomal protein</keyword>
<keyword id="KW-0694">RNA-binding</keyword>
<keyword id="KW-0699">rRNA-binding</keyword>
<comment type="function">
    <text evidence="1">One of the primary rRNA binding proteins, this protein initially binds near the 5'-end of the 23S rRNA. It is important during the early stages of 50S assembly. It makes multiple contacts with different domains of the 23S rRNA in the assembled 50S subunit and ribosome.</text>
</comment>
<comment type="function">
    <text evidence="1">Forms part of the polypeptide exit tunnel.</text>
</comment>
<comment type="subunit">
    <text evidence="1">Part of the 50S ribosomal subunit.</text>
</comment>
<comment type="similarity">
    <text evidence="1">Belongs to the universal ribosomal protein uL4 family.</text>
</comment>